<evidence type="ECO:0000255" key="1">
    <source>
        <dbReference type="HAMAP-Rule" id="MF_00184"/>
    </source>
</evidence>
<feature type="chain" id="PRO_0000100984" description="Threonine--tRNA ligase">
    <location>
        <begin position="1"/>
        <end position="627"/>
    </location>
</feature>
<feature type="region of interest" description="Catalytic" evidence="1">
    <location>
        <begin position="221"/>
        <end position="523"/>
    </location>
</feature>
<feature type="binding site" evidence="1">
    <location>
        <position position="319"/>
    </location>
    <ligand>
        <name>Zn(2+)</name>
        <dbReference type="ChEBI" id="CHEBI:29105"/>
    </ligand>
</feature>
<feature type="binding site" evidence="1">
    <location>
        <position position="370"/>
    </location>
    <ligand>
        <name>Zn(2+)</name>
        <dbReference type="ChEBI" id="CHEBI:29105"/>
    </ligand>
</feature>
<feature type="binding site" evidence="1">
    <location>
        <position position="500"/>
    </location>
    <ligand>
        <name>Zn(2+)</name>
        <dbReference type="ChEBI" id="CHEBI:29105"/>
    </ligand>
</feature>
<protein>
    <recommendedName>
        <fullName evidence="1">Threonine--tRNA ligase</fullName>
        <ecNumber evidence="1">6.1.1.3</ecNumber>
    </recommendedName>
    <alternativeName>
        <fullName evidence="1">Threonyl-tRNA synthetase</fullName>
        <shortName evidence="1">ThrRS</shortName>
    </alternativeName>
</protein>
<sequence>MTFRQPARRTLSGRFGALKCHNGGCSCDSKAMENDILRQSDPEKLHRIRHSTSHILAMAVQKLFPETKVTIGPAIENGFYYDFDRPTPFTPEDLKKIEKEMRRIVQQKLPLVREEVPREAMRERLEALGEPYKLELFEGFDHDAPVSLYRTGDWWDLCAGPHVESTAEIHPNAFKLRSVAGAYWRGDEKRAQLQRIYGTAWETPEQLEEFLRREEEAKKRDHRKLGRELGLFVFSDLVGPGLPLWTPKGALLRYILEEFLRKEQVKRGYQQVVTPHIARVDLFKTSGHWFKYKDDMFPLMATSEEEGAEEGFVMKPMNCPFHIQIYKSELHSYRELPIRLAEFGTVYRYEQSGELGGLTRVRGFTVDDSHLFVTPEQLDDEFKKVVDLIQFVFRSLQLGDGFSARLSFRDPTSDKYIGSDAAWEKAQAAILKASQDLGLKYFVAEGEAAFYGPKLDFIFRDALGREWQLGTVQVDYILPERFELEYVAEDGSRRRPVMIHRAPFGSLERFIAILIEHFAGDFPLWLAPEQVRILPVTDQFVGYAESVKDRLVSLEMRAEVDASSERLGKKIRNGETAKVPVLLVVGESEANSGTVAVRTRVEGEKDKGTLPVEEAIAYLQERLAKRT</sequence>
<reference key="1">
    <citation type="journal article" date="2003" name="DNA Res.">
        <title>Complete genome structure of Gloeobacter violaceus PCC 7421, a cyanobacterium that lacks thylakoids.</title>
        <authorList>
            <person name="Nakamura Y."/>
            <person name="Kaneko T."/>
            <person name="Sato S."/>
            <person name="Mimuro M."/>
            <person name="Miyashita H."/>
            <person name="Tsuchiya T."/>
            <person name="Sasamoto S."/>
            <person name="Watanabe A."/>
            <person name="Kawashima K."/>
            <person name="Kishida Y."/>
            <person name="Kiyokawa C."/>
            <person name="Kohara M."/>
            <person name="Matsumoto M."/>
            <person name="Matsuno A."/>
            <person name="Nakazaki N."/>
            <person name="Shimpo S."/>
            <person name="Takeuchi C."/>
            <person name="Yamada M."/>
            <person name="Tabata S."/>
        </authorList>
    </citation>
    <scope>NUCLEOTIDE SEQUENCE [LARGE SCALE GENOMIC DNA]</scope>
    <source>
        <strain>ATCC 29082 / PCC 7421</strain>
    </source>
</reference>
<comment type="function">
    <text evidence="1">Catalyzes the attachment of threonine to tRNA(Thr) in a two-step reaction: L-threonine is first activated by ATP to form Thr-AMP and then transferred to the acceptor end of tRNA(Thr). Also edits incorrectly charged L-seryl-tRNA(Thr).</text>
</comment>
<comment type="catalytic activity">
    <reaction evidence="1">
        <text>tRNA(Thr) + L-threonine + ATP = L-threonyl-tRNA(Thr) + AMP + diphosphate + H(+)</text>
        <dbReference type="Rhea" id="RHEA:24624"/>
        <dbReference type="Rhea" id="RHEA-COMP:9670"/>
        <dbReference type="Rhea" id="RHEA-COMP:9704"/>
        <dbReference type="ChEBI" id="CHEBI:15378"/>
        <dbReference type="ChEBI" id="CHEBI:30616"/>
        <dbReference type="ChEBI" id="CHEBI:33019"/>
        <dbReference type="ChEBI" id="CHEBI:57926"/>
        <dbReference type="ChEBI" id="CHEBI:78442"/>
        <dbReference type="ChEBI" id="CHEBI:78534"/>
        <dbReference type="ChEBI" id="CHEBI:456215"/>
        <dbReference type="EC" id="6.1.1.3"/>
    </reaction>
</comment>
<comment type="cofactor">
    <cofactor evidence="1">
        <name>Zn(2+)</name>
        <dbReference type="ChEBI" id="CHEBI:29105"/>
    </cofactor>
    <text evidence="1">Binds 1 zinc ion per subunit.</text>
</comment>
<comment type="subunit">
    <text evidence="1">Homodimer.</text>
</comment>
<comment type="subcellular location">
    <subcellularLocation>
        <location evidence="1">Cytoplasm</location>
    </subcellularLocation>
</comment>
<comment type="similarity">
    <text evidence="1">Belongs to the class-II aminoacyl-tRNA synthetase family.</text>
</comment>
<organism>
    <name type="scientific">Gloeobacter violaceus (strain ATCC 29082 / PCC 7421)</name>
    <dbReference type="NCBI Taxonomy" id="251221"/>
    <lineage>
        <taxon>Bacteria</taxon>
        <taxon>Bacillati</taxon>
        <taxon>Cyanobacteriota</taxon>
        <taxon>Cyanophyceae</taxon>
        <taxon>Gloeobacterales</taxon>
        <taxon>Gloeobacteraceae</taxon>
        <taxon>Gloeobacter</taxon>
    </lineage>
</organism>
<gene>
    <name evidence="1" type="primary">thrS</name>
    <name type="ordered locus">glr2886</name>
</gene>
<keyword id="KW-0030">Aminoacyl-tRNA synthetase</keyword>
<keyword id="KW-0067">ATP-binding</keyword>
<keyword id="KW-0963">Cytoplasm</keyword>
<keyword id="KW-0436">Ligase</keyword>
<keyword id="KW-0479">Metal-binding</keyword>
<keyword id="KW-0547">Nucleotide-binding</keyword>
<keyword id="KW-0648">Protein biosynthesis</keyword>
<keyword id="KW-1185">Reference proteome</keyword>
<keyword id="KW-0694">RNA-binding</keyword>
<keyword id="KW-0820">tRNA-binding</keyword>
<keyword id="KW-0862">Zinc</keyword>
<name>SYT_GLOVI</name>
<proteinExistence type="inferred from homology"/>
<dbReference type="EC" id="6.1.1.3" evidence="1"/>
<dbReference type="EMBL" id="BA000045">
    <property type="protein sequence ID" value="BAC90827.1"/>
    <property type="molecule type" value="Genomic_DNA"/>
</dbReference>
<dbReference type="RefSeq" id="NP_925832.1">
    <property type="nucleotide sequence ID" value="NC_005125.1"/>
</dbReference>
<dbReference type="SMR" id="Q7NCU0"/>
<dbReference type="FunCoup" id="Q7NCU0">
    <property type="interactions" value="373"/>
</dbReference>
<dbReference type="STRING" id="251221.gene:10760390"/>
<dbReference type="EnsemblBacteria" id="BAC90827">
    <property type="protein sequence ID" value="BAC90827"/>
    <property type="gene ID" value="BAC90827"/>
</dbReference>
<dbReference type="KEGG" id="gvi:glr2886"/>
<dbReference type="PATRIC" id="fig|251221.4.peg.2916"/>
<dbReference type="eggNOG" id="COG0441">
    <property type="taxonomic scope" value="Bacteria"/>
</dbReference>
<dbReference type="HOGENOM" id="CLU_008554_0_1_3"/>
<dbReference type="InParanoid" id="Q7NCU0"/>
<dbReference type="OrthoDB" id="9802304at2"/>
<dbReference type="PhylomeDB" id="Q7NCU0"/>
<dbReference type="Proteomes" id="UP000000557">
    <property type="component" value="Chromosome"/>
</dbReference>
<dbReference type="GO" id="GO:0005737">
    <property type="term" value="C:cytoplasm"/>
    <property type="evidence" value="ECO:0007669"/>
    <property type="project" value="UniProtKB-SubCell"/>
</dbReference>
<dbReference type="GO" id="GO:0005524">
    <property type="term" value="F:ATP binding"/>
    <property type="evidence" value="ECO:0007669"/>
    <property type="project" value="UniProtKB-UniRule"/>
</dbReference>
<dbReference type="GO" id="GO:0046872">
    <property type="term" value="F:metal ion binding"/>
    <property type="evidence" value="ECO:0007669"/>
    <property type="project" value="UniProtKB-KW"/>
</dbReference>
<dbReference type="GO" id="GO:0004829">
    <property type="term" value="F:threonine-tRNA ligase activity"/>
    <property type="evidence" value="ECO:0000318"/>
    <property type="project" value="GO_Central"/>
</dbReference>
<dbReference type="GO" id="GO:0000049">
    <property type="term" value="F:tRNA binding"/>
    <property type="evidence" value="ECO:0007669"/>
    <property type="project" value="UniProtKB-KW"/>
</dbReference>
<dbReference type="GO" id="GO:0006435">
    <property type="term" value="P:threonyl-tRNA aminoacylation"/>
    <property type="evidence" value="ECO:0000318"/>
    <property type="project" value="GO_Central"/>
</dbReference>
<dbReference type="CDD" id="cd00860">
    <property type="entry name" value="ThrRS_anticodon"/>
    <property type="match status" value="1"/>
</dbReference>
<dbReference type="CDD" id="cd00771">
    <property type="entry name" value="ThrRS_core"/>
    <property type="match status" value="1"/>
</dbReference>
<dbReference type="FunFam" id="3.30.54.20:FF:000002">
    <property type="entry name" value="Threonine--tRNA ligase"/>
    <property type="match status" value="1"/>
</dbReference>
<dbReference type="FunFam" id="3.30.930.10:FF:000002">
    <property type="entry name" value="Threonine--tRNA ligase"/>
    <property type="match status" value="1"/>
</dbReference>
<dbReference type="FunFam" id="3.40.50.800:FF:000001">
    <property type="entry name" value="Threonine--tRNA ligase"/>
    <property type="match status" value="1"/>
</dbReference>
<dbReference type="FunFam" id="3.30.980.10:FF:000005">
    <property type="entry name" value="Threonyl-tRNA synthetase, mitochondrial"/>
    <property type="match status" value="1"/>
</dbReference>
<dbReference type="Gene3D" id="3.30.54.20">
    <property type="match status" value="1"/>
</dbReference>
<dbReference type="Gene3D" id="3.40.50.800">
    <property type="entry name" value="Anticodon-binding domain"/>
    <property type="match status" value="1"/>
</dbReference>
<dbReference type="Gene3D" id="3.30.930.10">
    <property type="entry name" value="Bira Bifunctional Protein, Domain 2"/>
    <property type="match status" value="1"/>
</dbReference>
<dbReference type="Gene3D" id="3.30.980.10">
    <property type="entry name" value="Threonyl-trna Synthetase, Chain A, domain 2"/>
    <property type="match status" value="1"/>
</dbReference>
<dbReference type="HAMAP" id="MF_00184">
    <property type="entry name" value="Thr_tRNA_synth"/>
    <property type="match status" value="1"/>
</dbReference>
<dbReference type="InterPro" id="IPR002314">
    <property type="entry name" value="aa-tRNA-synt_IIb"/>
</dbReference>
<dbReference type="InterPro" id="IPR006195">
    <property type="entry name" value="aa-tRNA-synth_II"/>
</dbReference>
<dbReference type="InterPro" id="IPR045864">
    <property type="entry name" value="aa-tRNA-synth_II/BPL/LPL"/>
</dbReference>
<dbReference type="InterPro" id="IPR004154">
    <property type="entry name" value="Anticodon-bd"/>
</dbReference>
<dbReference type="InterPro" id="IPR036621">
    <property type="entry name" value="Anticodon-bd_dom_sf"/>
</dbReference>
<dbReference type="InterPro" id="IPR002320">
    <property type="entry name" value="Thr-tRNA-ligase_IIa"/>
</dbReference>
<dbReference type="InterPro" id="IPR018163">
    <property type="entry name" value="Thr/Ala-tRNA-synth_IIc_edit"/>
</dbReference>
<dbReference type="InterPro" id="IPR047246">
    <property type="entry name" value="ThrRS_anticodon"/>
</dbReference>
<dbReference type="InterPro" id="IPR033728">
    <property type="entry name" value="ThrRS_core"/>
</dbReference>
<dbReference type="InterPro" id="IPR012947">
    <property type="entry name" value="tRNA_SAD"/>
</dbReference>
<dbReference type="NCBIfam" id="TIGR00418">
    <property type="entry name" value="thrS"/>
    <property type="match status" value="1"/>
</dbReference>
<dbReference type="PANTHER" id="PTHR11451:SF44">
    <property type="entry name" value="THREONINE--TRNA LIGASE, CHLOROPLASTIC_MITOCHONDRIAL 2"/>
    <property type="match status" value="1"/>
</dbReference>
<dbReference type="PANTHER" id="PTHR11451">
    <property type="entry name" value="THREONINE-TRNA LIGASE"/>
    <property type="match status" value="1"/>
</dbReference>
<dbReference type="Pfam" id="PF03129">
    <property type="entry name" value="HGTP_anticodon"/>
    <property type="match status" value="1"/>
</dbReference>
<dbReference type="Pfam" id="PF00587">
    <property type="entry name" value="tRNA-synt_2b"/>
    <property type="match status" value="1"/>
</dbReference>
<dbReference type="Pfam" id="PF07973">
    <property type="entry name" value="tRNA_SAD"/>
    <property type="match status" value="1"/>
</dbReference>
<dbReference type="PRINTS" id="PR01047">
    <property type="entry name" value="TRNASYNTHTHR"/>
</dbReference>
<dbReference type="SMART" id="SM00863">
    <property type="entry name" value="tRNA_SAD"/>
    <property type="match status" value="1"/>
</dbReference>
<dbReference type="SUPFAM" id="SSF52954">
    <property type="entry name" value="Class II aaRS ABD-related"/>
    <property type="match status" value="1"/>
</dbReference>
<dbReference type="SUPFAM" id="SSF55681">
    <property type="entry name" value="Class II aaRS and biotin synthetases"/>
    <property type="match status" value="1"/>
</dbReference>
<dbReference type="SUPFAM" id="SSF55186">
    <property type="entry name" value="ThrRS/AlaRS common domain"/>
    <property type="match status" value="1"/>
</dbReference>
<dbReference type="PROSITE" id="PS50862">
    <property type="entry name" value="AA_TRNA_LIGASE_II"/>
    <property type="match status" value="1"/>
</dbReference>
<accession>Q7NCU0</accession>